<reference key="1">
    <citation type="journal article" date="1989" name="Virus Res.">
        <title>Complete nucleotide sequence of the hemagglutinin-neuraminidase (HN) mRNA of mumps virus and comparison of paramyxovirus HN proteins.</title>
        <authorList>
            <person name="Koevamees J."/>
            <person name="Norrby E."/>
            <person name="Elango N."/>
        </authorList>
    </citation>
    <scope>NUCLEOTIDE SEQUENCE [GENOMIC RNA]</scope>
</reference>
<reference key="2">
    <citation type="journal article" date="1990" name="J. Gen. Virol.">
        <title>Strain-variable editing during transcription of the P gene of mumps virus may lead to the generation of non-structural proteins NS1 (V) and NS2.</title>
        <authorList>
            <person name="Elliott G.D."/>
            <person name="Yeo R.P."/>
            <person name="Afzal M.A."/>
            <person name="Simpson E.J.B."/>
            <person name="Curran J.A."/>
            <person name="Rima B.K."/>
        </authorList>
    </citation>
    <scope>NUCLEOTIDE SEQUENCE [GENOMIC RNA] OF 1-153</scope>
</reference>
<reference key="3">
    <citation type="journal article" date="2020" name="Sci. Rep.">
        <title>Structural basis for Glycan-receptor binding by mumps virus hemagglutinin-neuraminidase.</title>
        <authorList>
            <person name="Forgione R.E."/>
            <person name="Di Carluccio C."/>
            <person name="Kubota M."/>
            <person name="Manabe Y."/>
            <person name="Fukase K."/>
            <person name="Molinaro A."/>
            <person name="Hashiguchi T."/>
            <person name="Marchetti R."/>
            <person name="Silipo A."/>
        </authorList>
    </citation>
    <scope>FUNCTION</scope>
</reference>
<reference key="4">
    <citation type="journal article" date="2022" name="Viruses">
        <title>Exploring the Mumps Virus Glycoproteins: A Review.</title>
        <authorList>
            <person name="Frost J.R."/>
            <person name="Shaikh S."/>
            <person name="Severini A."/>
        </authorList>
    </citation>
    <scope>REVIEW</scope>
</reference>
<accession>P19762</accession>
<accession>P33480</accession>
<organismHost>
    <name type="scientific">Homo sapiens</name>
    <name type="common">Human</name>
    <dbReference type="NCBI Taxonomy" id="9606"/>
</organismHost>
<organism>
    <name type="scientific">Mumps virus (strain SBL-1)</name>
    <name type="common">MuV</name>
    <dbReference type="NCBI Taxonomy" id="11173"/>
    <lineage>
        <taxon>Viruses</taxon>
        <taxon>Riboviria</taxon>
        <taxon>Orthornavirae</taxon>
        <taxon>Negarnaviricota</taxon>
        <taxon>Haploviricotina</taxon>
        <taxon>Monjiviricetes</taxon>
        <taxon>Mononegavirales</taxon>
        <taxon>Paramyxoviridae</taxon>
        <taxon>Rubulavirinae</taxon>
        <taxon>Orthorubulavirus</taxon>
        <taxon>Orthorubulavirus parotitidis</taxon>
        <taxon>Mumps orthorubulavirus</taxon>
    </lineage>
</organism>
<gene>
    <name type="primary">HN</name>
</gene>
<comment type="function">
    <text evidence="2 5 7">Attaches the virus to alpha-2,3-linked sialic acid-containing cell receptors and thereby initiating infection (PubMed:32005959). Binding of HN protein to the receptor induces a conformational change that allows the F protein to trigger virion/cell membranes fusion (By similarity). Binds to the glycan motifs sialyl Lewis (SLe) and GM2 ganglioside (GM2-glycan) (By similarity).</text>
</comment>
<comment type="function">
    <text evidence="4">Neuraminidase activity ensures the efficient spread of the virus by dissociating the mature virions from the neuraminic acid containing glycoproteins.</text>
</comment>
<comment type="catalytic activity">
    <reaction evidence="5">
        <text>Hydrolysis of alpha-(2-&gt;3)-, alpha-(2-&gt;6)-, alpha-(2-&gt;8)- glycosidic linkages of terminal sialic acid residues in oligosaccharides, glycoproteins, glycolipids, colominic acid and synthetic substrates.</text>
        <dbReference type="EC" id="3.2.1.18"/>
    </reaction>
</comment>
<comment type="subunit">
    <text evidence="1 5">Homotetramer; composed of disulfide-linked homodimers (By similarity). Interacts with F protein trimer (By similarity).</text>
</comment>
<comment type="subcellular location">
    <subcellularLocation>
        <location evidence="3">Virion membrane</location>
        <topology evidence="8">Single-pass type II membrane protein</topology>
    </subcellularLocation>
    <subcellularLocation>
        <location evidence="8">Host cell membrane</location>
        <topology evidence="8">Single-pass type II membrane protein</topology>
    </subcellularLocation>
</comment>
<comment type="domain">
    <text evidence="5">The C-terminus (head domain) is involved in binding the cellular receptor.</text>
</comment>
<comment type="similarity">
    <text evidence="8">Belongs to the paramyxoviruses hemagglutinin-neuraminidase family.</text>
</comment>
<evidence type="ECO:0000250" key="1">
    <source>
        <dbReference type="UniProtKB" id="P04853"/>
    </source>
</evidence>
<evidence type="ECO:0000250" key="2">
    <source>
        <dbReference type="UniProtKB" id="Q786F2"/>
    </source>
</evidence>
<evidence type="ECO:0000250" key="3">
    <source>
        <dbReference type="UniProtKB" id="Q8QV65"/>
    </source>
</evidence>
<evidence type="ECO:0000250" key="4">
    <source>
        <dbReference type="UniProtKB" id="Q91UL0"/>
    </source>
</evidence>
<evidence type="ECO:0000250" key="5">
    <source>
        <dbReference type="UniProtKB" id="Q9WAF5"/>
    </source>
</evidence>
<evidence type="ECO:0000255" key="6"/>
<evidence type="ECO:0000269" key="7">
    <source>
    </source>
</evidence>
<evidence type="ECO:0000305" key="8"/>
<name>HN_MUMP1</name>
<feature type="chain" id="PRO_0000142605" description="Hemagglutinin-neuraminidase">
    <location>
        <begin position="1"/>
        <end position="582"/>
    </location>
</feature>
<feature type="topological domain" description="Intravirion" evidence="6">
    <location>
        <begin position="1"/>
        <end position="34"/>
    </location>
</feature>
<feature type="transmembrane region" description="Helical; Signal-anchor for type II membrane protein" evidence="6">
    <location>
        <begin position="35"/>
        <end position="55"/>
    </location>
</feature>
<feature type="topological domain" description="Virion surface" evidence="6">
    <location>
        <begin position="56"/>
        <end position="582"/>
    </location>
</feature>
<feature type="region of interest" description="Involved in neuraminidase activity" evidence="4">
    <location>
        <begin position="240"/>
        <end position="245"/>
    </location>
</feature>
<feature type="site" description="Binding to the glycan motifs of the host receptor" evidence="5">
    <location>
        <position position="180"/>
    </location>
</feature>
<feature type="site" description="Binding to the glycan motifs of the host receptor" evidence="5">
    <location>
        <position position="242"/>
    </location>
</feature>
<feature type="site" description="Binding to the glycan motifs of the host receptor" evidence="5">
    <location>
        <position position="264"/>
    </location>
</feature>
<feature type="site" description="Binding to the glycan motifs of the host receptor" evidence="5">
    <location>
        <position position="323"/>
    </location>
</feature>
<feature type="site" description="Binding to the glycan motifs of the host receptor" evidence="5">
    <location>
        <position position="369"/>
    </location>
</feature>
<feature type="site" description="Binding to the glycan motifs of the host receptor" evidence="5">
    <location>
        <position position="407"/>
    </location>
</feature>
<feature type="site" description="Binding to the host receptor" evidence="5">
    <location>
        <position position="422"/>
    </location>
</feature>
<feature type="site" description="Binding to the glycan motifs of the host receptor" evidence="5">
    <location>
        <position position="512"/>
    </location>
</feature>
<feature type="site" description="Binding to the glycan motifs of the glycan motifs of the host receptor" evidence="5">
    <location>
        <position position="540"/>
    </location>
</feature>
<feature type="glycosylation site" description="N-linked (GlcNAc...) asparagine; by host" evidence="5">
    <location>
        <position position="284"/>
    </location>
</feature>
<feature type="glycosylation site" description="N-linked (GlcNAc...) asparagine; by host" evidence="5">
    <location>
        <position position="329"/>
    </location>
</feature>
<feature type="glycosylation site" description="N-linked (GlcNAc...) asparagine; by host" evidence="5">
    <location>
        <position position="400"/>
    </location>
</feature>
<feature type="glycosylation site" description="N-linked (GlcNAc...) asparagine; by host" evidence="5">
    <location>
        <position position="448"/>
    </location>
</feature>
<feature type="glycosylation site" description="N-linked (GlcNAc...) asparagine; by host" evidence="5">
    <location>
        <position position="507"/>
    </location>
</feature>
<feature type="disulfide bond" evidence="5">
    <location>
        <begin position="178"/>
        <end position="202"/>
    </location>
</feature>
<feature type="disulfide bond" evidence="5">
    <location>
        <begin position="192"/>
        <end position="253"/>
    </location>
</feature>
<feature type="disulfide bond" evidence="5">
    <location>
        <begin position="244"/>
        <end position="257"/>
    </location>
</feature>
<feature type="disulfide bond" evidence="5">
    <location>
        <begin position="350"/>
        <end position="471"/>
    </location>
</feature>
<feature type="disulfide bond" evidence="5">
    <location>
        <begin position="382"/>
        <end position="392"/>
    </location>
</feature>
<feature type="disulfide bond" evidence="5">
    <location>
        <begin position="465"/>
        <end position="475"/>
    </location>
</feature>
<feature type="disulfide bond" evidence="5">
    <location>
        <begin position="545"/>
        <end position="556"/>
    </location>
</feature>
<dbReference type="EC" id="3.2.1.18" evidence="5"/>
<dbReference type="EMBL" id="M55065">
    <property type="protein sequence ID" value="AAA74751.1"/>
    <property type="molecule type" value="Genomic_RNA"/>
</dbReference>
<dbReference type="EMBL" id="D00663">
    <property type="protein sequence ID" value="BAA00563.1"/>
    <property type="molecule type" value="Genomic_RNA"/>
</dbReference>
<dbReference type="PIR" id="A42758">
    <property type="entry name" value="HNNZSB"/>
</dbReference>
<dbReference type="SMR" id="P19762"/>
<dbReference type="CAZy" id="GH83">
    <property type="family name" value="Glycoside Hydrolase Family 83"/>
</dbReference>
<dbReference type="GlyCosmos" id="P19762">
    <property type="glycosylation" value="5 sites, No reported glycans"/>
</dbReference>
<dbReference type="GO" id="GO:0020002">
    <property type="term" value="C:host cell plasma membrane"/>
    <property type="evidence" value="ECO:0007669"/>
    <property type="project" value="UniProtKB-SubCell"/>
</dbReference>
<dbReference type="GO" id="GO:0016020">
    <property type="term" value="C:membrane"/>
    <property type="evidence" value="ECO:0007669"/>
    <property type="project" value="UniProtKB-KW"/>
</dbReference>
<dbReference type="GO" id="GO:0019031">
    <property type="term" value="C:viral envelope"/>
    <property type="evidence" value="ECO:0007669"/>
    <property type="project" value="UniProtKB-KW"/>
</dbReference>
<dbReference type="GO" id="GO:0055036">
    <property type="term" value="C:virion membrane"/>
    <property type="evidence" value="ECO:0007669"/>
    <property type="project" value="UniProtKB-SubCell"/>
</dbReference>
<dbReference type="GO" id="GO:0004308">
    <property type="term" value="F:exo-alpha-sialidase activity"/>
    <property type="evidence" value="ECO:0007669"/>
    <property type="project" value="UniProtKB-EC"/>
</dbReference>
<dbReference type="GO" id="GO:0046789">
    <property type="term" value="F:host cell surface receptor binding"/>
    <property type="evidence" value="ECO:0007669"/>
    <property type="project" value="InterPro"/>
</dbReference>
<dbReference type="GO" id="GO:0046718">
    <property type="term" value="P:symbiont entry into host cell"/>
    <property type="evidence" value="ECO:0007669"/>
    <property type="project" value="UniProtKB-KW"/>
</dbReference>
<dbReference type="GO" id="GO:0019062">
    <property type="term" value="P:virion attachment to host cell"/>
    <property type="evidence" value="ECO:0007669"/>
    <property type="project" value="UniProtKB-KW"/>
</dbReference>
<dbReference type="CDD" id="cd15469">
    <property type="entry name" value="HN"/>
    <property type="match status" value="1"/>
</dbReference>
<dbReference type="Gene3D" id="1.20.5.110">
    <property type="match status" value="1"/>
</dbReference>
<dbReference type="Gene3D" id="2.120.10.10">
    <property type="match status" value="1"/>
</dbReference>
<dbReference type="InterPro" id="IPR016285">
    <property type="entry name" value="Hemagglutn-neuramid"/>
</dbReference>
<dbReference type="InterPro" id="IPR000665">
    <property type="entry name" value="Hemagglutn/HN"/>
</dbReference>
<dbReference type="InterPro" id="IPR036278">
    <property type="entry name" value="Sialidase_sf"/>
</dbReference>
<dbReference type="Pfam" id="PF00423">
    <property type="entry name" value="HN"/>
    <property type="match status" value="1"/>
</dbReference>
<dbReference type="PIRSF" id="PIRSF001072">
    <property type="entry name" value="Hemagglut-neuramid_paramyxoV"/>
    <property type="match status" value="1"/>
</dbReference>
<dbReference type="SUPFAM" id="SSF50939">
    <property type="entry name" value="Sialidases"/>
    <property type="match status" value="1"/>
</dbReference>
<protein>
    <recommendedName>
        <fullName>Hemagglutinin-neuraminidase</fullName>
        <ecNumber evidence="5">3.2.1.18</ecNumber>
    </recommendedName>
</protein>
<proteinExistence type="inferred from homology"/>
<keyword id="KW-1015">Disulfide bond</keyword>
<keyword id="KW-0325">Glycoprotein</keyword>
<keyword id="KW-0348">Hemagglutinin</keyword>
<keyword id="KW-1032">Host cell membrane</keyword>
<keyword id="KW-1043">Host membrane</keyword>
<keyword id="KW-0945">Host-virus interaction</keyword>
<keyword id="KW-0378">Hydrolase</keyword>
<keyword id="KW-0472">Membrane</keyword>
<keyword id="KW-0735">Signal-anchor</keyword>
<keyword id="KW-0812">Transmembrane</keyword>
<keyword id="KW-1133">Transmembrane helix</keyword>
<keyword id="KW-1161">Viral attachment to host cell</keyword>
<keyword id="KW-0261">Viral envelope protein</keyword>
<keyword id="KW-0946">Virion</keyword>
<keyword id="KW-1160">Virus entry into host cell</keyword>
<sequence>MEPSKLFIMSDNATVAPGPVVNAAGKKTFRTCFRILVLSVQAVTLILVIVTLGELIRMINDQGLSNQLSSITDKIRESAAVIASAVGVMNQVIHGVTVSLPLQIEGNQNQLLSTLATICTNRNQVSNCSTNIPLVNDLRFINGINKFIIEDYATHDFSIGNPLNMPSFIPTATSPNGCTRIPSFSLGKTHWCYTHNVINANCKDHTSSNQYVSMGILVQTASGYPMFKTLKIQYLSDGLNRKSCSIATVPDGCAMYCYVSTQLEANDYAGSSPPTQKLTLLFYNDTITERTISPSGLEGNWATLVPGVGSGIYFENKLIFPAYGGVLPNSTLGVKSAREFFRPVNPYNPCSGPPQELDQRALRSYFPRYFSSRRVQSAFLVCAWNQILVTNCELVVPSNNQTLMGAEGRVLLINNRLLYYQRSTSWWPYELLYEISFTFTNSGQSSVNMSWIPIYSFTPPGSGNCSGKNVCPTVCVSGVYLDPWPLTPYSHQSGINRNFYFTGALLNSSTTRVNPTLYVSALNNLKVLAPYGTQGLFASYTTTTCFQDTGDASVYCVYIMELASNIVGEFQILPVLARLTIT</sequence>